<protein>
    <recommendedName>
        <fullName evidence="1">Cell division protein SepF</fullName>
    </recommendedName>
</protein>
<feature type="chain" id="PRO_0000334034" description="Cell division protein SepF">
    <location>
        <begin position="1"/>
        <end position="152"/>
    </location>
</feature>
<accession>Q71XY3</accession>
<dbReference type="EMBL" id="AE017262">
    <property type="protein sequence ID" value="AAT04832.1"/>
    <property type="molecule type" value="Genomic_DNA"/>
</dbReference>
<dbReference type="RefSeq" id="WP_003724067.1">
    <property type="nucleotide sequence ID" value="NC_002973.6"/>
</dbReference>
<dbReference type="SMR" id="Q71XY3"/>
<dbReference type="KEGG" id="lmf:LMOf2365_2062"/>
<dbReference type="HOGENOM" id="CLU_078499_4_1_9"/>
<dbReference type="GO" id="GO:0005737">
    <property type="term" value="C:cytoplasm"/>
    <property type="evidence" value="ECO:0007669"/>
    <property type="project" value="UniProtKB-SubCell"/>
</dbReference>
<dbReference type="GO" id="GO:0000917">
    <property type="term" value="P:division septum assembly"/>
    <property type="evidence" value="ECO:0007669"/>
    <property type="project" value="UniProtKB-KW"/>
</dbReference>
<dbReference type="GO" id="GO:0043093">
    <property type="term" value="P:FtsZ-dependent cytokinesis"/>
    <property type="evidence" value="ECO:0007669"/>
    <property type="project" value="UniProtKB-UniRule"/>
</dbReference>
<dbReference type="Gene3D" id="3.30.110.150">
    <property type="entry name" value="SepF-like protein"/>
    <property type="match status" value="1"/>
</dbReference>
<dbReference type="HAMAP" id="MF_01197">
    <property type="entry name" value="SepF"/>
    <property type="match status" value="1"/>
</dbReference>
<dbReference type="InterPro" id="IPR023052">
    <property type="entry name" value="Cell_div_SepF"/>
</dbReference>
<dbReference type="InterPro" id="IPR007561">
    <property type="entry name" value="Cell_div_SepF/SepF-rel"/>
</dbReference>
<dbReference type="InterPro" id="IPR038594">
    <property type="entry name" value="SepF-like_sf"/>
</dbReference>
<dbReference type="PANTHER" id="PTHR35798">
    <property type="entry name" value="CELL DIVISION PROTEIN SEPF"/>
    <property type="match status" value="1"/>
</dbReference>
<dbReference type="PANTHER" id="PTHR35798:SF1">
    <property type="entry name" value="CELL DIVISION PROTEIN SEPF"/>
    <property type="match status" value="1"/>
</dbReference>
<dbReference type="Pfam" id="PF04472">
    <property type="entry name" value="SepF"/>
    <property type="match status" value="1"/>
</dbReference>
<evidence type="ECO:0000255" key="1">
    <source>
        <dbReference type="HAMAP-Rule" id="MF_01197"/>
    </source>
</evidence>
<comment type="function">
    <text evidence="1">Cell division protein that is part of the divisome complex and is recruited early to the Z-ring. Probably stimulates Z-ring formation, perhaps through the cross-linking of FtsZ protofilaments. Its function overlaps with FtsA.</text>
</comment>
<comment type="subunit">
    <text evidence="1">Homodimer. Interacts with FtsZ.</text>
</comment>
<comment type="subcellular location">
    <subcellularLocation>
        <location evidence="1">Cytoplasm</location>
    </subcellularLocation>
    <text evidence="1">Localizes to the division site, in a FtsZ-dependent manner.</text>
</comment>
<comment type="similarity">
    <text evidence="1">Belongs to the SepF family.</text>
</comment>
<organism>
    <name type="scientific">Listeria monocytogenes serotype 4b (strain F2365)</name>
    <dbReference type="NCBI Taxonomy" id="265669"/>
    <lineage>
        <taxon>Bacteria</taxon>
        <taxon>Bacillati</taxon>
        <taxon>Bacillota</taxon>
        <taxon>Bacilli</taxon>
        <taxon>Bacillales</taxon>
        <taxon>Listeriaceae</taxon>
        <taxon>Listeria</taxon>
    </lineage>
</organism>
<name>SEPF_LISMF</name>
<gene>
    <name evidence="1" type="primary">sepF</name>
    <name type="ordered locus">LMOf2365_2062</name>
</gene>
<sequence>MGLSNKFKSFFFLDEEEEYYEEEVAREPEPMQKKTKKEKPNKNRFYAVEEDDAKVVSMQGAQFSSRMVLAEPRVYAEAQELADYLKEYKSVVVNLQRISHDQATRIVDFLSGTVYALGGDIQRVGNNIFLCTPDNVEVDGSISEMLDEQNFM</sequence>
<reference key="1">
    <citation type="journal article" date="2004" name="Nucleic Acids Res.">
        <title>Whole genome comparisons of serotype 4b and 1/2a strains of the food-borne pathogen Listeria monocytogenes reveal new insights into the core genome components of this species.</title>
        <authorList>
            <person name="Nelson K.E."/>
            <person name="Fouts D.E."/>
            <person name="Mongodin E.F."/>
            <person name="Ravel J."/>
            <person name="DeBoy R.T."/>
            <person name="Kolonay J.F."/>
            <person name="Rasko D.A."/>
            <person name="Angiuoli S.V."/>
            <person name="Gill S.R."/>
            <person name="Paulsen I.T."/>
            <person name="Peterson J.D."/>
            <person name="White O."/>
            <person name="Nelson W.C."/>
            <person name="Nierman W.C."/>
            <person name="Beanan M.J."/>
            <person name="Brinkac L.M."/>
            <person name="Daugherty S.C."/>
            <person name="Dodson R.J."/>
            <person name="Durkin A.S."/>
            <person name="Madupu R."/>
            <person name="Haft D.H."/>
            <person name="Selengut J."/>
            <person name="Van Aken S.E."/>
            <person name="Khouri H.M."/>
            <person name="Fedorova N."/>
            <person name="Forberger H.A."/>
            <person name="Tran B."/>
            <person name="Kathariou S."/>
            <person name="Wonderling L.D."/>
            <person name="Uhlich G.A."/>
            <person name="Bayles D.O."/>
            <person name="Luchansky J.B."/>
            <person name="Fraser C.M."/>
        </authorList>
    </citation>
    <scope>NUCLEOTIDE SEQUENCE [LARGE SCALE GENOMIC DNA]</scope>
    <source>
        <strain>F2365</strain>
    </source>
</reference>
<keyword id="KW-0131">Cell cycle</keyword>
<keyword id="KW-0132">Cell division</keyword>
<keyword id="KW-0963">Cytoplasm</keyword>
<keyword id="KW-0717">Septation</keyword>
<proteinExistence type="inferred from homology"/>